<keyword id="KW-0053">Apoptosis</keyword>
<keyword id="KW-1035">Host cytoplasm</keyword>
<keyword id="KW-1043">Host membrane</keyword>
<keyword id="KW-1045">Host mitochondrion</keyword>
<keyword id="KW-1046">Host mitochondrion inner membrane</keyword>
<keyword id="KW-1048">Host nucleus</keyword>
<keyword id="KW-0945">Host-virus interaction</keyword>
<keyword id="KW-1090">Inhibition of host innate immune response by virus</keyword>
<keyword id="KW-1097">Inhibition of host MAVS by virus</keyword>
<keyword id="KW-1113">Inhibition of host RLR pathway by virus</keyword>
<keyword id="KW-0472">Membrane</keyword>
<keyword id="KW-1119">Modulation of host cell apoptosis by virus</keyword>
<keyword id="KW-0899">Viral immunoevasion</keyword>
<organismHost>
    <name type="scientific">Aves</name>
    <dbReference type="NCBI Taxonomy" id="8782"/>
</organismHost>
<organismHost>
    <name type="scientific">Homo sapiens</name>
    <name type="common">Human</name>
    <dbReference type="NCBI Taxonomy" id="9606"/>
</organismHost>
<organismHost>
    <name type="scientific">Sus scrofa</name>
    <name type="common">Pig</name>
    <dbReference type="NCBI Taxonomy" id="9823"/>
</organismHost>
<sequence>MEQEQDTPWILSTGHISTQKGEGGQQTPKLEHHNSTRLMDHCQKTMNQVVMPKQIVYWKQWLSLRNPILVFLKTRVLRQWRLFSKHEWTN</sequence>
<protein>
    <recommendedName>
        <fullName evidence="1">Protein PB1-F2</fullName>
    </recommendedName>
</protein>
<evidence type="ECO:0000255" key="1">
    <source>
        <dbReference type="HAMAP-Rule" id="MF_04064"/>
    </source>
</evidence>
<evidence type="ECO:0000256" key="2">
    <source>
        <dbReference type="SAM" id="MobiDB-lite"/>
    </source>
</evidence>
<gene>
    <name evidence="1" type="primary">PB1</name>
    <name type="synonym">PB1-F2</name>
</gene>
<comment type="function">
    <text evidence="1">Plays an important role in promoting lung pathology in both primary viral infection and secondary bacterial infection. Promotes alteration of mitochondrial morphology, dissipation of mitochondrial membrane potential, and cell death. Alternatively, inhibits the production of interferon in the infected cell at the level of host mitochondrial antiviral signaling MAVS. Its level of expression differs greatly depending on which cell type is infected, in a manner that is independent of the levels of expression of other viral proteins. Monocytic cells are more affected than epithelial cells. Seems to disable virus-infected monocytes or other host innate immune cells. During early stage of infection, predisposes the mitochondria to permeability transition through interaction with host SLC25A6/ANT3 and VDAC1. These proteins participate in the formation of the permeability transition pore complex (PTPC) responsible of the release of mitochondrial products that triggers apoptosis.</text>
</comment>
<comment type="subunit">
    <text evidence="1">Oligomer. Interacts with human SLC25A6/ANT3 and VDAC1. Interacts with host MAVS.</text>
</comment>
<comment type="subcellular location">
    <subcellularLocation>
        <location evidence="1">Host mitochondrion inner membrane</location>
    </subcellularLocation>
    <subcellularLocation>
        <location evidence="1">Host nucleus</location>
    </subcellularLocation>
    <subcellularLocation>
        <location evidence="1">Host cytoplasm</location>
        <location evidence="1">Host cytosol</location>
    </subcellularLocation>
    <text evidence="1">Inner mitochondrial membrane in most cells types. Otherwise is detected in the nucleus and cytosol.</text>
</comment>
<comment type="miscellaneous">
    <text>Is not encoded in all strains, and seems to be dispensable for replication.</text>
</comment>
<comment type="similarity">
    <text evidence="1">Belongs to the influenza viruses PB1-F2 family.</text>
</comment>
<name>PB1F2_I40A0</name>
<dbReference type="EMBL" id="CY013277">
    <property type="protein sequence ID" value="ABI20835.1"/>
    <property type="molecule type" value="Other_RNA"/>
</dbReference>
<dbReference type="SMR" id="Q0HD51"/>
<dbReference type="Proteomes" id="UP000156248">
    <property type="component" value="Genome"/>
</dbReference>
<dbReference type="GO" id="GO:0044164">
    <property type="term" value="C:host cell cytosol"/>
    <property type="evidence" value="ECO:0007669"/>
    <property type="project" value="UniProtKB-SubCell"/>
</dbReference>
<dbReference type="GO" id="GO:0044192">
    <property type="term" value="C:host cell mitochondrial inner membrane"/>
    <property type="evidence" value="ECO:0007669"/>
    <property type="project" value="UniProtKB-SubCell"/>
</dbReference>
<dbReference type="GO" id="GO:0042025">
    <property type="term" value="C:host cell nucleus"/>
    <property type="evidence" value="ECO:0007669"/>
    <property type="project" value="UniProtKB-SubCell"/>
</dbReference>
<dbReference type="GO" id="GO:0016020">
    <property type="term" value="C:membrane"/>
    <property type="evidence" value="ECO:0007669"/>
    <property type="project" value="UniProtKB-UniRule"/>
</dbReference>
<dbReference type="GO" id="GO:0052150">
    <property type="term" value="P:symbiont-mediated perturbation of host apoptosis"/>
    <property type="evidence" value="ECO:0007669"/>
    <property type="project" value="UniProtKB-KW"/>
</dbReference>
<dbReference type="GO" id="GO:0039545">
    <property type="term" value="P:symbiont-mediated suppression of host cytoplasmic pattern recognition receptor signaling pathway via inhibition of MAVS activity"/>
    <property type="evidence" value="ECO:0000250"/>
    <property type="project" value="UniProtKB"/>
</dbReference>
<dbReference type="HAMAP" id="MF_04064">
    <property type="entry name" value="INFV_PB1F2"/>
    <property type="match status" value="1"/>
</dbReference>
<dbReference type="InterPro" id="IPR021045">
    <property type="entry name" value="Flu_proapoptotic_PB1-F2"/>
</dbReference>
<dbReference type="Pfam" id="PF11986">
    <property type="entry name" value="PB1-F2"/>
    <property type="match status" value="1"/>
</dbReference>
<organism>
    <name type="scientific">Influenza A virus (strain A/Hickox/1940 H1N1)</name>
    <dbReference type="NCBI Taxonomy" id="383543"/>
    <lineage>
        <taxon>Viruses</taxon>
        <taxon>Riboviria</taxon>
        <taxon>Orthornavirae</taxon>
        <taxon>Negarnaviricota</taxon>
        <taxon>Polyploviricotina</taxon>
        <taxon>Insthoviricetes</taxon>
        <taxon>Articulavirales</taxon>
        <taxon>Orthomyxoviridae</taxon>
        <taxon>Alphainfluenzavirus</taxon>
        <taxon>Alphainfluenzavirus influenzae</taxon>
        <taxon>Influenza A virus</taxon>
    </lineage>
</organism>
<accession>Q0HD51</accession>
<feature type="chain" id="PRO_0000373015" description="Protein PB1-F2">
    <location>
        <begin position="1"/>
        <end position="90"/>
    </location>
</feature>
<feature type="region of interest" description="Disordered" evidence="2">
    <location>
        <begin position="1"/>
        <end position="30"/>
    </location>
</feature>
<feature type="region of interest" description="Mitochondrial targeting sequence" evidence="1">
    <location>
        <begin position="65"/>
        <end position="87"/>
    </location>
</feature>
<feature type="compositionally biased region" description="Polar residues" evidence="2">
    <location>
        <begin position="14"/>
        <end position="28"/>
    </location>
</feature>
<feature type="site" description="Low pathogenicity" evidence="1">
    <location>
        <position position="66"/>
    </location>
</feature>
<reference key="1">
    <citation type="submission" date="2006-08" db="EMBL/GenBank/DDBJ databases">
        <title>The NIAID influenza genome sequencing project.</title>
        <authorList>
            <person name="Spiro D."/>
            <person name="Ghedin E."/>
            <person name="Sengamalay N."/>
            <person name="Halpin R."/>
            <person name="Boyne A."/>
            <person name="Zaborsky J."/>
            <person name="Feldblyum T."/>
            <person name="Subbu V."/>
            <person name="Sparenborg J."/>
            <person name="Shumway M."/>
            <person name="Sitz J."/>
            <person name="Katzel D."/>
            <person name="Koo H."/>
            <person name="Salzberg S.L."/>
            <person name="Griesemer S."/>
            <person name="St George K."/>
            <person name="Bennett R."/>
            <person name="Taylor J."/>
            <person name="Bennink J.R."/>
            <person name="Yewdell J.W."/>
            <person name="Bao Y."/>
            <person name="Bolotov P."/>
            <person name="Dernovoy D."/>
            <person name="Kiryutin B."/>
            <person name="Lipman D.J."/>
            <person name="Tatusova T."/>
        </authorList>
    </citation>
    <scope>NUCLEOTIDE SEQUENCE [GENOMIC RNA]</scope>
</reference>
<reference key="2">
    <citation type="submission" date="2006-09" db="EMBL/GenBank/DDBJ databases">
        <authorList>
            <consortium name="The NIAID Influenza Genome Sequencing Consortium"/>
        </authorList>
    </citation>
    <scope>NUCLEOTIDE SEQUENCE [GENOMIC RNA]</scope>
</reference>
<proteinExistence type="inferred from homology"/>